<comment type="function">
    <text evidence="1">Together with its co-chaperonin GroES, plays an essential role in assisting protein folding. The GroEL-GroES system forms a nano-cage that allows encapsulation of the non-native substrate proteins and provides a physical environment optimized to promote and accelerate protein folding.</text>
</comment>
<comment type="catalytic activity">
    <reaction evidence="1">
        <text>ATP + H2O + a folded polypeptide = ADP + phosphate + an unfolded polypeptide.</text>
        <dbReference type="EC" id="5.6.1.7"/>
    </reaction>
</comment>
<comment type="subunit">
    <text evidence="1">Forms a cylinder of 14 subunits composed of two heptameric rings stacked back-to-back. Interacts with the co-chaperonin GroES.</text>
</comment>
<comment type="subcellular location">
    <subcellularLocation>
        <location evidence="1">Cytoplasm</location>
    </subcellularLocation>
</comment>
<comment type="similarity">
    <text evidence="1 2">Belongs to the chaperonin (HSP60) family.</text>
</comment>
<feature type="chain" id="PRO_0000063426" description="Chaperonin GroEL">
    <location>
        <begin position="1" status="less than"/>
        <end position="120" status="greater than"/>
    </location>
</feature>
<feature type="binding site" evidence="1">
    <location>
        <begin position="23"/>
        <end position="27"/>
    </location>
    <ligand>
        <name>ATP</name>
        <dbReference type="ChEBI" id="CHEBI:30616"/>
    </ligand>
</feature>
<feature type="non-terminal residue">
    <location>
        <position position="1"/>
    </location>
</feature>
<feature type="non-terminal residue">
    <location>
        <position position="120"/>
    </location>
</feature>
<sequence length="120" mass="12354">PYEKIGAELVKEVAKKTDDVAGDGTTTATVLAQALVREGLRNVAAGANPLGLKRGIEKAVETVSENLLKSAKEVETKEQIAATAGISAGDTTIGDLIAEAMDKVGNEGVITVEESNTFGL</sequence>
<keyword id="KW-0067">ATP-binding</keyword>
<keyword id="KW-0143">Chaperone</keyword>
<keyword id="KW-0963">Cytoplasm</keyword>
<keyword id="KW-0413">Isomerase</keyword>
<keyword id="KW-0547">Nucleotide-binding</keyword>
<keyword id="KW-0346">Stress response</keyword>
<protein>
    <recommendedName>
        <fullName evidence="1">Chaperonin GroEL</fullName>
        <ecNumber evidence="1">5.6.1.7</ecNumber>
    </recommendedName>
    <alternativeName>
        <fullName evidence="1">60 kDa chaperonin</fullName>
    </alternativeName>
    <alternativeName>
        <fullName>65 kDa heat shock protein</fullName>
    </alternativeName>
    <alternativeName>
        <fullName evidence="1">Chaperonin-60</fullName>
        <shortName evidence="1">Cpn60</shortName>
    </alternativeName>
</protein>
<gene>
    <name evidence="1" type="primary">groEL</name>
    <name evidence="1" type="synonym">groL</name>
    <name type="synonym">mopA</name>
</gene>
<proteinExistence type="inferred from homology"/>
<accession>Q49025</accession>
<reference key="1">
    <citation type="journal article" date="1995" name="Arch. Pathol. Lab. Med.">
        <title>Rapid Mycobacterium species assignment and unambiguous identification of mutations associated with antimicrobial resistance in Mycobacterium tuberculosis by automated DNA sequencing.</title>
        <authorList>
            <person name="Kapur V."/>
            <person name="Li L.L."/>
            <person name="Hamrick M.R."/>
            <person name="Plikaytis B.B."/>
            <person name="Shinnick T.M."/>
            <person name="Telenti A."/>
            <person name="Jacobs W.R. Jr."/>
            <person name="Banerjee A."/>
            <person name="Cole S."/>
            <person name="Yuen K.Y."/>
            <person name="Clarridge J.E."/>
            <person name="Kreiswirth B.N."/>
            <person name="Musser J.M."/>
        </authorList>
    </citation>
    <scope>NUCLEOTIDE SEQUENCE [GENOMIC DNA]</scope>
    <source>
        <strain>557</strain>
    </source>
</reference>
<dbReference type="EC" id="5.6.1.7" evidence="1"/>
<dbReference type="EMBL" id="U17929">
    <property type="protein sequence ID" value="AAB39048.1"/>
    <property type="molecule type" value="Genomic_DNA"/>
</dbReference>
<dbReference type="SMR" id="Q49025"/>
<dbReference type="GO" id="GO:0005737">
    <property type="term" value="C:cytoplasm"/>
    <property type="evidence" value="ECO:0007669"/>
    <property type="project" value="UniProtKB-SubCell"/>
</dbReference>
<dbReference type="GO" id="GO:0005524">
    <property type="term" value="F:ATP binding"/>
    <property type="evidence" value="ECO:0007669"/>
    <property type="project" value="UniProtKB-KW"/>
</dbReference>
<dbReference type="GO" id="GO:0140662">
    <property type="term" value="F:ATP-dependent protein folding chaperone"/>
    <property type="evidence" value="ECO:0007669"/>
    <property type="project" value="InterPro"/>
</dbReference>
<dbReference type="GO" id="GO:0016853">
    <property type="term" value="F:isomerase activity"/>
    <property type="evidence" value="ECO:0007669"/>
    <property type="project" value="UniProtKB-KW"/>
</dbReference>
<dbReference type="GO" id="GO:0042026">
    <property type="term" value="P:protein refolding"/>
    <property type="evidence" value="ECO:0007669"/>
    <property type="project" value="InterPro"/>
</dbReference>
<dbReference type="Gene3D" id="1.10.560.10">
    <property type="entry name" value="GroEL-like equatorial domain"/>
    <property type="match status" value="1"/>
</dbReference>
<dbReference type="Gene3D" id="3.30.260.10">
    <property type="entry name" value="TCP-1-like chaperonin intermediate domain"/>
    <property type="match status" value="1"/>
</dbReference>
<dbReference type="InterPro" id="IPR001844">
    <property type="entry name" value="Cpn60/GroEL"/>
</dbReference>
<dbReference type="InterPro" id="IPR002423">
    <property type="entry name" value="Cpn60/GroEL/TCP-1"/>
</dbReference>
<dbReference type="InterPro" id="IPR027413">
    <property type="entry name" value="GROEL-like_equatorial_sf"/>
</dbReference>
<dbReference type="InterPro" id="IPR027410">
    <property type="entry name" value="TCP-1-like_intermed_sf"/>
</dbReference>
<dbReference type="PANTHER" id="PTHR45633">
    <property type="entry name" value="60 KDA HEAT SHOCK PROTEIN, MITOCHONDRIAL"/>
    <property type="match status" value="1"/>
</dbReference>
<dbReference type="Pfam" id="PF00118">
    <property type="entry name" value="Cpn60_TCP1"/>
    <property type="match status" value="1"/>
</dbReference>
<dbReference type="SUPFAM" id="SSF48592">
    <property type="entry name" value="GroEL equatorial domain-like"/>
    <property type="match status" value="1"/>
</dbReference>
<name>CH60_MYCCI</name>
<organism>
    <name type="scientific">Mycolicibacterium chitae</name>
    <name type="common">Mycobacterium chitae</name>
    <dbReference type="NCBI Taxonomy" id="1792"/>
    <lineage>
        <taxon>Bacteria</taxon>
        <taxon>Bacillati</taxon>
        <taxon>Actinomycetota</taxon>
        <taxon>Actinomycetes</taxon>
        <taxon>Mycobacteriales</taxon>
        <taxon>Mycobacteriaceae</taxon>
        <taxon>Mycolicibacterium</taxon>
    </lineage>
</organism>
<evidence type="ECO:0000255" key="1">
    <source>
        <dbReference type="HAMAP-Rule" id="MF_00600"/>
    </source>
</evidence>
<evidence type="ECO:0000305" key="2"/>